<keyword id="KW-0002">3D-structure</keyword>
<keyword id="KW-0020">Allergen</keyword>
<keyword id="KW-0903">Direct protein sequencing</keyword>
<keyword id="KW-1015">Disulfide bond</keyword>
<keyword id="KW-0379">Hydroxylation</keyword>
<keyword id="KW-1185">Reference proteome</keyword>
<keyword id="KW-0964">Secreted</keyword>
<keyword id="KW-0732">Signal</keyword>
<evidence type="ECO:0000250" key="1">
    <source>
        <dbReference type="UniProtKB" id="P84527"/>
    </source>
</evidence>
<evidence type="ECO:0000255" key="2"/>
<evidence type="ECO:0000256" key="3">
    <source>
        <dbReference type="SAM" id="MobiDB-lite"/>
    </source>
</evidence>
<evidence type="ECO:0000269" key="4">
    <source>
    </source>
</evidence>
<evidence type="ECO:0000269" key="5">
    <source>
    </source>
</evidence>
<evidence type="ECO:0000303" key="6">
    <source>
    </source>
</evidence>
<evidence type="ECO:0000305" key="7"/>
<evidence type="ECO:0000312" key="8">
    <source>
        <dbReference type="EMBL" id="PSR86579.1"/>
    </source>
</evidence>
<evidence type="ECO:0007744" key="9">
    <source>
        <dbReference type="PDB" id="4PMK"/>
    </source>
</evidence>
<evidence type="ECO:0007829" key="10">
    <source>
        <dbReference type="PDB" id="4PMK"/>
    </source>
</evidence>
<accession>P85261</accession>
<accession>A0A2R6P7K4</accession>
<accession>L7TT83</accession>
<comment type="function">
    <text evidence="1">Kissper is an anion-selective pore-forming peptide.</text>
</comment>
<comment type="subcellular location">
    <subcellularLocation>
        <location evidence="1">Secreted</location>
    </subcellularLocation>
</comment>
<comment type="PTM">
    <text evidence="4">Undergoes proteolytic cleavage by actinidin to produce kissper and KiTH. Three forms of KiTH are produced by cleavage at different sites.</text>
</comment>
<comment type="allergen">
    <text evidence="4">Causes an allergic reaction in human. Binds to IgE from the serum of kiwi-allergic patients.</text>
</comment>
<comment type="similarity">
    <text evidence="2">Belongs to the kiwellin family.</text>
</comment>
<organism>
    <name type="scientific">Actinidia chinensis var. chinensis</name>
    <name type="common">Chinese soft-hair kiwi</name>
    <dbReference type="NCBI Taxonomy" id="1590841"/>
    <lineage>
        <taxon>Eukaryota</taxon>
        <taxon>Viridiplantae</taxon>
        <taxon>Streptophyta</taxon>
        <taxon>Embryophyta</taxon>
        <taxon>Tracheophyta</taxon>
        <taxon>Spermatophyta</taxon>
        <taxon>Magnoliopsida</taxon>
        <taxon>eudicotyledons</taxon>
        <taxon>Gunneridae</taxon>
        <taxon>Pentapetalae</taxon>
        <taxon>asterids</taxon>
        <taxon>Ericales</taxon>
        <taxon>Actinidiaceae</taxon>
        <taxon>Actinidia</taxon>
    </lineage>
</organism>
<protein>
    <recommendedName>
        <fullName>Kiwellin</fullName>
    </recommendedName>
    <allergenName>Act c 5</allergenName>
    <component>
        <recommendedName>
            <fullName>Kissper</fullName>
        </recommendedName>
    </component>
    <component>
        <recommendedName>
            <fullName>KiTH-3</fullName>
        </recommendedName>
    </component>
    <component>
        <recommendedName>
            <fullName>KiTH-1</fullName>
        </recommendedName>
    </component>
    <component>
        <recommendedName>
            <fullName>KiTH-2</fullName>
        </recommendedName>
    </component>
</protein>
<proteinExistence type="evidence at protein level"/>
<feature type="signal peptide" evidence="4">
    <location>
        <begin position="1"/>
        <end position="24"/>
    </location>
</feature>
<feature type="chain" id="PRO_0000343453" description="Kiwellin">
    <location>
        <begin position="25"/>
        <end position="213"/>
    </location>
</feature>
<feature type="peptide" id="PRO_0000343454" description="Kissper" evidence="4">
    <location>
        <begin position="25"/>
        <end position="63"/>
    </location>
</feature>
<feature type="chain" id="PRO_0000343455" description="KiTH-3" evidence="4">
    <location>
        <begin position="62"/>
        <end position="213"/>
    </location>
</feature>
<feature type="chain" id="PRO_0000343456" description="KiTH-1" evidence="4">
    <location>
        <begin position="64"/>
        <end position="213"/>
    </location>
</feature>
<feature type="chain" id="PRO_0000343457" description="KiTH-2" evidence="4">
    <location>
        <begin position="66"/>
        <end position="213"/>
    </location>
</feature>
<feature type="region of interest" description="Disordered" evidence="3">
    <location>
        <begin position="91"/>
        <end position="121"/>
    </location>
</feature>
<feature type="compositionally biased region" description="Polar residues" evidence="3">
    <location>
        <begin position="93"/>
        <end position="107"/>
    </location>
</feature>
<feature type="modified residue" description="4-hydroxyproline" evidence="1">
    <location>
        <position position="65"/>
    </location>
</feature>
<feature type="modified residue" description="4-hydroxyproline" evidence="1">
    <location>
        <position position="67"/>
    </location>
</feature>
<feature type="disulfide bond" evidence="1">
    <location>
        <begin position="28"/>
        <end position="60"/>
    </location>
</feature>
<feature type="disulfide bond" evidence="1">
    <location>
        <begin position="32"/>
        <end position="44"/>
    </location>
</feature>
<feature type="disulfide bond" evidence="1">
    <location>
        <begin position="38"/>
        <end position="49"/>
    </location>
</feature>
<feature type="disulfide bond" evidence="5 9">
    <location>
        <begin position="72"/>
        <end position="90"/>
    </location>
</feature>
<feature type="disulfide bond" evidence="5 9">
    <location>
        <begin position="80"/>
        <end position="172"/>
    </location>
</feature>
<feature type="disulfide bond" evidence="5 9">
    <location>
        <begin position="119"/>
        <end position="144"/>
    </location>
</feature>
<feature type="disulfide bond" evidence="5 9">
    <location>
        <begin position="166"/>
        <end position="182"/>
    </location>
</feature>
<feature type="sequence conflict" description="In Ref. 1; AGC39168." evidence="7" ref="1">
    <original>V</original>
    <variation>L</variation>
    <location>
        <position position="8"/>
    </location>
</feature>
<feature type="sequence conflict" description="In Ref. 1; AGC39168." evidence="7" ref="1">
    <original>E</original>
    <variation>K</variation>
    <location>
        <position position="46"/>
    </location>
</feature>
<feature type="sequence conflict" description="In Ref. 1; AGC39168." evidence="7" ref="1">
    <original>R</original>
    <variation>Q</variation>
    <location>
        <position position="81"/>
    </location>
</feature>
<feature type="sequence conflict" description="In Ref. 1; AGC39168." evidence="7" ref="1">
    <original>K</original>
    <variation>E</variation>
    <location>
        <position position="165"/>
    </location>
</feature>
<feature type="sequence conflict" description="In Ref. 1; AGC39168." evidence="7" ref="1">
    <original>D</original>
    <variation>N</variation>
    <location>
        <position position="200"/>
    </location>
</feature>
<feature type="turn" evidence="10">
    <location>
        <begin position="53"/>
        <end position="55"/>
    </location>
</feature>
<feature type="turn" evidence="10">
    <location>
        <begin position="59"/>
        <end position="62"/>
    </location>
</feature>
<feature type="strand" evidence="10">
    <location>
        <begin position="76"/>
        <end position="79"/>
    </location>
</feature>
<feature type="strand" evidence="10">
    <location>
        <begin position="84"/>
        <end position="87"/>
    </location>
</feature>
<feature type="strand" evidence="10">
    <location>
        <begin position="98"/>
        <end position="104"/>
    </location>
</feature>
<feature type="strand" evidence="10">
    <location>
        <begin position="108"/>
        <end position="113"/>
    </location>
</feature>
<feature type="turn" evidence="10">
    <location>
        <begin position="118"/>
        <end position="121"/>
    </location>
</feature>
<feature type="strand" evidence="10">
    <location>
        <begin position="130"/>
        <end position="134"/>
    </location>
</feature>
<feature type="helix" evidence="10">
    <location>
        <begin position="135"/>
        <end position="138"/>
    </location>
</feature>
<feature type="helix" evidence="10">
    <location>
        <begin position="139"/>
        <end position="141"/>
    </location>
</feature>
<feature type="turn" evidence="10">
    <location>
        <begin position="142"/>
        <end position="145"/>
    </location>
</feature>
<feature type="strand" evidence="10">
    <location>
        <begin position="147"/>
        <end position="152"/>
    </location>
</feature>
<feature type="strand" evidence="10">
    <location>
        <begin position="157"/>
        <end position="166"/>
    </location>
</feature>
<feature type="turn" evidence="10">
    <location>
        <begin position="174"/>
        <end position="178"/>
    </location>
</feature>
<feature type="strand" evidence="10">
    <location>
        <begin position="184"/>
        <end position="189"/>
    </location>
</feature>
<feature type="helix" evidence="10">
    <location>
        <begin position="191"/>
        <end position="196"/>
    </location>
</feature>
<feature type="helix" evidence="10">
    <location>
        <begin position="201"/>
        <end position="203"/>
    </location>
</feature>
<feature type="strand" evidence="10">
    <location>
        <begin position="206"/>
        <end position="212"/>
    </location>
</feature>
<dbReference type="EMBL" id="JX905294">
    <property type="protein sequence ID" value="AGC39168.1"/>
    <property type="molecule type" value="mRNA"/>
</dbReference>
<dbReference type="EMBL" id="NKQK01000028">
    <property type="protein sequence ID" value="PSR86579.1"/>
    <property type="molecule type" value="Genomic_DNA"/>
</dbReference>
<dbReference type="PDB" id="4PMK">
    <property type="method" value="X-ray"/>
    <property type="resolution" value="2.05 A"/>
    <property type="chains" value="A/B=25-213"/>
</dbReference>
<dbReference type="PDBsum" id="4PMK"/>
<dbReference type="SMR" id="P85261"/>
<dbReference type="STRING" id="1590841.P85261"/>
<dbReference type="Allergome" id="11668">
    <property type="allergen name" value="Act c 5.0102"/>
</dbReference>
<dbReference type="Allergome" id="4062">
    <property type="allergen name" value="Act c 5"/>
</dbReference>
<dbReference type="Allergome" id="5734">
    <property type="allergen name" value="Act c 5.0101"/>
</dbReference>
<dbReference type="EnsemblPlants" id="PSR86579">
    <property type="protein sequence ID" value="PSR86579"/>
    <property type="gene ID" value="CEY00_Acc32202"/>
</dbReference>
<dbReference type="Gramene" id="PSR86579">
    <property type="protein sequence ID" value="PSR86579"/>
    <property type="gene ID" value="CEY00_Acc32202"/>
</dbReference>
<dbReference type="InParanoid" id="P85261"/>
<dbReference type="OMA" id="SVNGCDR"/>
<dbReference type="OrthoDB" id="406505at2759"/>
<dbReference type="EvolutionaryTrace" id="P85261"/>
<dbReference type="Proteomes" id="UP000241394">
    <property type="component" value="Chromosome LG28"/>
</dbReference>
<dbReference type="GO" id="GO:0005576">
    <property type="term" value="C:extracellular region"/>
    <property type="evidence" value="ECO:0007669"/>
    <property type="project" value="UniProtKB-SubCell"/>
</dbReference>
<dbReference type="CDD" id="cd22270">
    <property type="entry name" value="DPBB_kiwellin-like"/>
    <property type="match status" value="1"/>
</dbReference>
<dbReference type="Gene3D" id="2.40.40.10">
    <property type="entry name" value="RlpA-like domain"/>
    <property type="match status" value="1"/>
</dbReference>
<dbReference type="InterPro" id="IPR039271">
    <property type="entry name" value="Kiwellin-like"/>
</dbReference>
<dbReference type="InterPro" id="IPR036908">
    <property type="entry name" value="RlpA-like_sf"/>
</dbReference>
<dbReference type="PANTHER" id="PTHR33191">
    <property type="entry name" value="RIPENING-RELATED PROTEIN 2-RELATED"/>
    <property type="match status" value="1"/>
</dbReference>
<dbReference type="PANTHER" id="PTHR33191:SF9">
    <property type="entry name" value="RIPENING-RELATED PROTEIN 2-RELATED"/>
    <property type="match status" value="1"/>
</dbReference>
<dbReference type="Pfam" id="PF24300">
    <property type="entry name" value="KWL1"/>
    <property type="match status" value="1"/>
</dbReference>
<dbReference type="SUPFAM" id="SSF50685">
    <property type="entry name" value="Barwin-like endoglucanases"/>
    <property type="match status" value="1"/>
</dbReference>
<name>KIWEL_ACTCC</name>
<reference key="1">
    <citation type="journal article" date="2013" name="J. Agric. Food Chem.">
        <title>Diversity and relative levels of actinidin, kiwellin, and thaumatin-like allergens in 15 varieties of kiwifruit (Actinidia).</title>
        <authorList>
            <person name="Maddumage R."/>
            <person name="Nieuwenhuizen N.J."/>
            <person name="Bulley S.M."/>
            <person name="Cooney J.M."/>
            <person name="Green S.A."/>
            <person name="Atkinson R.G."/>
        </authorList>
    </citation>
    <scope>NUCLEOTIDE SEQUENCE [MRNA]</scope>
    <scope>IDENTIFICATION BY MASS SPECTROMETRY</scope>
</reference>
<reference key="2">
    <citation type="journal article" date="2018" name="BMC Genomics">
        <title>A manually annotated Actinidia chinensis var. chinensis (kiwifruit) genome highlights the challenges associated with draft genomes and gene prediction in plants.</title>
        <authorList>
            <person name="Pilkington S.M."/>
            <person name="Crowhurst R."/>
            <person name="Hilario E."/>
            <person name="Nardozza S."/>
            <person name="Fraser L."/>
            <person name="Peng Y."/>
            <person name="Gunaseelan K."/>
            <person name="Simpson R."/>
            <person name="Tahir J."/>
            <person name="Deroles S.C."/>
            <person name="Templeton K."/>
            <person name="Luo Z."/>
            <person name="Davy M."/>
            <person name="Cheng C."/>
            <person name="McNeilage M."/>
            <person name="Scaglione D."/>
            <person name="Liu Y."/>
            <person name="Zhang Q."/>
            <person name="Datson P."/>
            <person name="De Silva N."/>
            <person name="Gardiner S.E."/>
            <person name="Bassett H."/>
            <person name="Chagne D."/>
            <person name="McCallum J."/>
            <person name="Dzierzon H."/>
            <person name="Deng C."/>
            <person name="Wang Y.Y."/>
            <person name="Barron L."/>
            <person name="Manako K."/>
            <person name="Bowen J."/>
            <person name="Foster T.M."/>
            <person name="Erridge Z.A."/>
            <person name="Tiffin H."/>
            <person name="Waite C.N."/>
            <person name="Davies K.M."/>
            <person name="Grierson E.P."/>
            <person name="Laing W.A."/>
            <person name="Kirk R."/>
            <person name="Chen X."/>
            <person name="Wood M."/>
            <person name="Montefiori M."/>
            <person name="Brummell D.A."/>
            <person name="Schwinn K.E."/>
            <person name="Catanach A."/>
            <person name="Fullerton C."/>
            <person name="Li D."/>
            <person name="Meiyalaghan S."/>
            <person name="Nieuwenhuizen N."/>
            <person name="Read N."/>
            <person name="Prakash R."/>
            <person name="Hunter D."/>
            <person name="Zhang H."/>
            <person name="McKenzie M."/>
            <person name="Knabel M."/>
            <person name="Harris A."/>
            <person name="Allan A.C."/>
            <person name="Gleave A."/>
            <person name="Chen A."/>
            <person name="Janssen B.J."/>
            <person name="Plunkett B."/>
            <person name="Ampomah-Dwamena C."/>
            <person name="Voogd C."/>
            <person name="Leif D."/>
            <person name="Lafferty D."/>
            <person name="Souleyre E.J.F."/>
            <person name="Varkonyi-Gasic E."/>
            <person name="Gambi F."/>
            <person name="Hanley J."/>
            <person name="Yao J.L."/>
            <person name="Cheung J."/>
            <person name="David K.M."/>
            <person name="Warren B."/>
            <person name="Marsh K."/>
            <person name="Snowden K.C."/>
            <person name="Lin-Wang K."/>
            <person name="Brian L."/>
            <person name="Martinez-Sanchez M."/>
            <person name="Wang M."/>
            <person name="Ileperuma N."/>
            <person name="Macnee N."/>
            <person name="Campin R."/>
            <person name="McAtee P."/>
            <person name="Drummond R.S.M."/>
            <person name="Espley R.V."/>
            <person name="Ireland H.S."/>
            <person name="Wu R."/>
            <person name="Atkinson R.G."/>
            <person name="Karunairetnam S."/>
            <person name="Bulley S."/>
            <person name="Chunkath S."/>
            <person name="Hanley Z."/>
            <person name="Storey R."/>
            <person name="Thrimawithana A.H."/>
            <person name="Thomson S."/>
            <person name="David C."/>
            <person name="Testolin R."/>
            <person name="Huang H."/>
            <person name="Hellens R.P."/>
            <person name="Schaffer R.J."/>
        </authorList>
    </citation>
    <scope>NUCLEOTIDE SEQUENCE [LARGE SCALE GENOMIC DNA]</scope>
    <source>
        <strain>cv. Red5</strain>
    </source>
</reference>
<reference evidence="7" key="3">
    <citation type="journal article" date="2008" name="J. Agric. Food Chem.">
        <title>Kiwellin, a modular protein from green and gold kiwi fruits: evidence of in vivo and in vitro processing and IgE binding.</title>
        <authorList>
            <person name="Tuppo L."/>
            <person name="Giangrieco I."/>
            <person name="Palazzo P."/>
            <person name="Bernardi M.L."/>
            <person name="Scala E."/>
            <person name="Carratore V."/>
            <person name="Tamburrini M."/>
            <person name="Mari A."/>
            <person name="Ciardiello M.A."/>
        </authorList>
    </citation>
    <scope>PROTEIN SEQUENCE OF 25-44 AND 62-75</scope>
    <scope>ALLERGEN</scope>
    <scope>PROTEOLYTIC CLEAVAGE BY ACTINIDIN</scope>
    <source>
        <strain evidence="4">cv. Hort 16A</strain>
        <tissue evidence="4">Fruit</tissue>
    </source>
</reference>
<reference key="4">
    <citation type="journal article" date="2014" name="J. Struct. Biol.">
        <title>Crystal structure of kiwellin, a major cell-wall protein from kiwifruit.</title>
        <authorList>
            <person name="Hamiaux C."/>
            <person name="Maddumage R."/>
            <person name="Middleditch M.J."/>
            <person name="Prakash R."/>
            <person name="Brummell D.A."/>
            <person name="Baker E.N."/>
            <person name="Atkinson R.G."/>
        </authorList>
    </citation>
    <scope>X-RAY CRYSTALLOGRAPHY (2.05 ANGSTROMS) OF 25-213</scope>
    <scope>DISULFIDE BONDS</scope>
</reference>
<sequence length="213" mass="22242">MAQLSLLVLSLFLTLISLPPPGASISSCNGPCRDLNDCDGQLICIEGKCNDDPEVGTHICRGTTPSPQPGGCKPSGTLTCRGKSHPTYDCSPPVTSSTPAKLTNNDFSEGGDGGGPSECDESYHSNNERIVALSTGWYNGGSRCGKMIRITASNGKSVSAKVVDKCDSRHGCDKEHAGQPPCRNNIVDGSNAVWSALGLDKNVGVVDITWSMA</sequence>
<gene>
    <name evidence="6" type="primary">KWL1</name>
    <name evidence="8" type="ORF">CEY00_Acc32202</name>
</gene>